<gene>
    <name evidence="1" type="primary">mraY</name>
    <name type="ordered locus">Sama_0351</name>
</gene>
<name>MRAY_SHEAM</name>
<comment type="function">
    <text evidence="1">Catalyzes the initial step of the lipid cycle reactions in the biosynthesis of the cell wall peptidoglycan: transfers peptidoglycan precursor phospho-MurNAc-pentapeptide from UDP-MurNAc-pentapeptide onto the lipid carrier undecaprenyl phosphate, yielding undecaprenyl-pyrophosphoryl-MurNAc-pentapeptide, known as lipid I.</text>
</comment>
<comment type="catalytic activity">
    <reaction evidence="1">
        <text>UDP-N-acetyl-alpha-D-muramoyl-L-alanyl-gamma-D-glutamyl-meso-2,6-diaminopimeloyl-D-alanyl-D-alanine + di-trans,octa-cis-undecaprenyl phosphate = di-trans,octa-cis-undecaprenyl diphospho-N-acetyl-alpha-D-muramoyl-L-alanyl-D-glutamyl-meso-2,6-diaminopimeloyl-D-alanyl-D-alanine + UMP</text>
        <dbReference type="Rhea" id="RHEA:28386"/>
        <dbReference type="ChEBI" id="CHEBI:57865"/>
        <dbReference type="ChEBI" id="CHEBI:60392"/>
        <dbReference type="ChEBI" id="CHEBI:61386"/>
        <dbReference type="ChEBI" id="CHEBI:61387"/>
        <dbReference type="EC" id="2.7.8.13"/>
    </reaction>
</comment>
<comment type="cofactor">
    <cofactor evidence="1">
        <name>Mg(2+)</name>
        <dbReference type="ChEBI" id="CHEBI:18420"/>
    </cofactor>
</comment>
<comment type="pathway">
    <text evidence="1">Cell wall biogenesis; peptidoglycan biosynthesis.</text>
</comment>
<comment type="subcellular location">
    <subcellularLocation>
        <location evidence="1">Cell inner membrane</location>
        <topology evidence="1">Multi-pass membrane protein</topology>
    </subcellularLocation>
</comment>
<comment type="similarity">
    <text evidence="1">Belongs to the glycosyltransferase 4 family. MraY subfamily.</text>
</comment>
<proteinExistence type="inferred from homology"/>
<reference key="1">
    <citation type="submission" date="2006-12" db="EMBL/GenBank/DDBJ databases">
        <title>Complete sequence of Shewanella amazonensis SB2B.</title>
        <authorList>
            <consortium name="US DOE Joint Genome Institute"/>
            <person name="Copeland A."/>
            <person name="Lucas S."/>
            <person name="Lapidus A."/>
            <person name="Barry K."/>
            <person name="Detter J.C."/>
            <person name="Glavina del Rio T."/>
            <person name="Hammon N."/>
            <person name="Israni S."/>
            <person name="Dalin E."/>
            <person name="Tice H."/>
            <person name="Pitluck S."/>
            <person name="Munk A.C."/>
            <person name="Brettin T."/>
            <person name="Bruce D."/>
            <person name="Han C."/>
            <person name="Tapia R."/>
            <person name="Gilna P."/>
            <person name="Schmutz J."/>
            <person name="Larimer F."/>
            <person name="Land M."/>
            <person name="Hauser L."/>
            <person name="Kyrpides N."/>
            <person name="Mikhailova N."/>
            <person name="Fredrickson J."/>
            <person name="Richardson P."/>
        </authorList>
    </citation>
    <scope>NUCLEOTIDE SEQUENCE [LARGE SCALE GENOMIC DNA]</scope>
    <source>
        <strain>ATCC BAA-1098 / SB2B</strain>
    </source>
</reference>
<keyword id="KW-0131">Cell cycle</keyword>
<keyword id="KW-0132">Cell division</keyword>
<keyword id="KW-0997">Cell inner membrane</keyword>
<keyword id="KW-1003">Cell membrane</keyword>
<keyword id="KW-0133">Cell shape</keyword>
<keyword id="KW-0961">Cell wall biogenesis/degradation</keyword>
<keyword id="KW-0460">Magnesium</keyword>
<keyword id="KW-0472">Membrane</keyword>
<keyword id="KW-0479">Metal-binding</keyword>
<keyword id="KW-0573">Peptidoglycan synthesis</keyword>
<keyword id="KW-1185">Reference proteome</keyword>
<keyword id="KW-0808">Transferase</keyword>
<keyword id="KW-0812">Transmembrane</keyword>
<keyword id="KW-1133">Transmembrane helix</keyword>
<organism>
    <name type="scientific">Shewanella amazonensis (strain ATCC BAA-1098 / SB2B)</name>
    <dbReference type="NCBI Taxonomy" id="326297"/>
    <lineage>
        <taxon>Bacteria</taxon>
        <taxon>Pseudomonadati</taxon>
        <taxon>Pseudomonadota</taxon>
        <taxon>Gammaproteobacteria</taxon>
        <taxon>Alteromonadales</taxon>
        <taxon>Shewanellaceae</taxon>
        <taxon>Shewanella</taxon>
    </lineage>
</organism>
<dbReference type="EC" id="2.7.8.13" evidence="1"/>
<dbReference type="EMBL" id="CP000507">
    <property type="protein sequence ID" value="ABL98562.1"/>
    <property type="molecule type" value="Genomic_DNA"/>
</dbReference>
<dbReference type="RefSeq" id="WP_011758472.1">
    <property type="nucleotide sequence ID" value="NC_008700.1"/>
</dbReference>
<dbReference type="SMR" id="A1S2F6"/>
<dbReference type="STRING" id="326297.Sama_0351"/>
<dbReference type="KEGG" id="saz:Sama_0351"/>
<dbReference type="eggNOG" id="COG0472">
    <property type="taxonomic scope" value="Bacteria"/>
</dbReference>
<dbReference type="HOGENOM" id="CLU_023982_0_0_6"/>
<dbReference type="OrthoDB" id="9805475at2"/>
<dbReference type="UniPathway" id="UPA00219"/>
<dbReference type="Proteomes" id="UP000009175">
    <property type="component" value="Chromosome"/>
</dbReference>
<dbReference type="GO" id="GO:0005886">
    <property type="term" value="C:plasma membrane"/>
    <property type="evidence" value="ECO:0007669"/>
    <property type="project" value="UniProtKB-SubCell"/>
</dbReference>
<dbReference type="GO" id="GO:0046872">
    <property type="term" value="F:metal ion binding"/>
    <property type="evidence" value="ECO:0007669"/>
    <property type="project" value="UniProtKB-KW"/>
</dbReference>
<dbReference type="GO" id="GO:0008963">
    <property type="term" value="F:phospho-N-acetylmuramoyl-pentapeptide-transferase activity"/>
    <property type="evidence" value="ECO:0007669"/>
    <property type="project" value="UniProtKB-UniRule"/>
</dbReference>
<dbReference type="GO" id="GO:0051992">
    <property type="term" value="F:UDP-N-acetylmuramoyl-L-alanyl-D-glutamyl-meso-2,6-diaminopimelyl-D-alanyl-D-alanine:undecaprenyl-phosphate transferase activity"/>
    <property type="evidence" value="ECO:0007669"/>
    <property type="project" value="RHEA"/>
</dbReference>
<dbReference type="GO" id="GO:0051301">
    <property type="term" value="P:cell division"/>
    <property type="evidence" value="ECO:0007669"/>
    <property type="project" value="UniProtKB-KW"/>
</dbReference>
<dbReference type="GO" id="GO:0071555">
    <property type="term" value="P:cell wall organization"/>
    <property type="evidence" value="ECO:0007669"/>
    <property type="project" value="UniProtKB-KW"/>
</dbReference>
<dbReference type="GO" id="GO:0009252">
    <property type="term" value="P:peptidoglycan biosynthetic process"/>
    <property type="evidence" value="ECO:0007669"/>
    <property type="project" value="UniProtKB-UniRule"/>
</dbReference>
<dbReference type="GO" id="GO:0008360">
    <property type="term" value="P:regulation of cell shape"/>
    <property type="evidence" value="ECO:0007669"/>
    <property type="project" value="UniProtKB-KW"/>
</dbReference>
<dbReference type="CDD" id="cd06852">
    <property type="entry name" value="GT_MraY"/>
    <property type="match status" value="1"/>
</dbReference>
<dbReference type="HAMAP" id="MF_00038">
    <property type="entry name" value="MraY"/>
    <property type="match status" value="1"/>
</dbReference>
<dbReference type="InterPro" id="IPR000715">
    <property type="entry name" value="Glycosyl_transferase_4"/>
</dbReference>
<dbReference type="InterPro" id="IPR003524">
    <property type="entry name" value="PNAcMuramoyl-5peptid_Trfase"/>
</dbReference>
<dbReference type="InterPro" id="IPR018480">
    <property type="entry name" value="PNAcMuramoyl-5peptid_Trfase_CS"/>
</dbReference>
<dbReference type="NCBIfam" id="TIGR00445">
    <property type="entry name" value="mraY"/>
    <property type="match status" value="1"/>
</dbReference>
<dbReference type="PANTHER" id="PTHR22926">
    <property type="entry name" value="PHOSPHO-N-ACETYLMURAMOYL-PENTAPEPTIDE-TRANSFERASE"/>
    <property type="match status" value="1"/>
</dbReference>
<dbReference type="PANTHER" id="PTHR22926:SF5">
    <property type="entry name" value="PHOSPHO-N-ACETYLMURAMOYL-PENTAPEPTIDE-TRANSFERASE HOMOLOG"/>
    <property type="match status" value="1"/>
</dbReference>
<dbReference type="Pfam" id="PF00953">
    <property type="entry name" value="Glycos_transf_4"/>
    <property type="match status" value="1"/>
</dbReference>
<dbReference type="Pfam" id="PF10555">
    <property type="entry name" value="MraY_sig1"/>
    <property type="match status" value="1"/>
</dbReference>
<dbReference type="PROSITE" id="PS01347">
    <property type="entry name" value="MRAY_1"/>
    <property type="match status" value="1"/>
</dbReference>
<dbReference type="PROSITE" id="PS01348">
    <property type="entry name" value="MRAY_2"/>
    <property type="match status" value="1"/>
</dbReference>
<feature type="chain" id="PRO_1000003054" description="Phospho-N-acetylmuramoyl-pentapeptide-transferase">
    <location>
        <begin position="1"/>
        <end position="360"/>
    </location>
</feature>
<feature type="transmembrane region" description="Helical" evidence="1">
    <location>
        <begin position="26"/>
        <end position="46"/>
    </location>
</feature>
<feature type="transmembrane region" description="Helical" evidence="1">
    <location>
        <begin position="74"/>
        <end position="94"/>
    </location>
</feature>
<feature type="transmembrane region" description="Helical" evidence="1">
    <location>
        <begin position="97"/>
        <end position="117"/>
    </location>
</feature>
<feature type="transmembrane region" description="Helical" evidence="1">
    <location>
        <begin position="132"/>
        <end position="152"/>
    </location>
</feature>
<feature type="transmembrane region" description="Helical" evidence="1">
    <location>
        <begin position="168"/>
        <end position="188"/>
    </location>
</feature>
<feature type="transmembrane region" description="Helical" evidence="1">
    <location>
        <begin position="199"/>
        <end position="219"/>
    </location>
</feature>
<feature type="transmembrane region" description="Helical" evidence="1">
    <location>
        <begin position="236"/>
        <end position="256"/>
    </location>
</feature>
<feature type="transmembrane region" description="Helical" evidence="1">
    <location>
        <begin position="263"/>
        <end position="283"/>
    </location>
</feature>
<feature type="transmembrane region" description="Helical" evidence="1">
    <location>
        <begin position="288"/>
        <end position="308"/>
    </location>
</feature>
<feature type="transmembrane region" description="Helical" evidence="1">
    <location>
        <begin position="338"/>
        <end position="358"/>
    </location>
</feature>
<evidence type="ECO:0000255" key="1">
    <source>
        <dbReference type="HAMAP-Rule" id="MF_00038"/>
    </source>
</evidence>
<sequence length="360" mass="40058">MLVYLAEYLTQFYTGFNVFSYVTFRAILALLTALMFSLWWGPKLIERLQVLQIGQVVRNDGPESHFSKRGTPTMGGLLILAGIFIGVLLWGDLGSRYVWVMLFVLGSFGLIGFIDDYRKVVRKDPKGLIARWKYIFQSLAALVVAFYLFYSTKHPGETQLVVPFFKDILPQLGLMFIVLTYFTIVGASNAVNLTDGLDGLAIMPTVMVAAAFALIAYLSGHVQFANYLHIPYLPGSGELVIVCTAIVGAGLGFLWFNTYPAQVFMGDVGSLSLGAALGTIAVLVRQEILLVIMGGVFVMETLSVILQVGSYKLRGQRIFRMAPIHHHYELKGWPEPRVIVRFWIISLFLVLLGLATLKLR</sequence>
<accession>A1S2F6</accession>
<protein>
    <recommendedName>
        <fullName evidence="1">Phospho-N-acetylmuramoyl-pentapeptide-transferase</fullName>
        <ecNumber evidence="1">2.7.8.13</ecNumber>
    </recommendedName>
    <alternativeName>
        <fullName evidence="1">UDP-MurNAc-pentapeptide phosphotransferase</fullName>
    </alternativeName>
</protein>